<protein>
    <recommendedName>
        <fullName>CASP-like protein 4A1</fullName>
        <shortName>SbCASPL4A1</shortName>
    </recommendedName>
</protein>
<dbReference type="EMBL" id="CM000763">
    <property type="protein sequence ID" value="EES06244.1"/>
    <property type="molecule type" value="Genomic_DNA"/>
</dbReference>
<dbReference type="RefSeq" id="XP_002453268.1">
    <property type="nucleotide sequence ID" value="XM_002453223.1"/>
</dbReference>
<dbReference type="STRING" id="4558.C5XTX2"/>
<dbReference type="EnsemblPlants" id="EES06244">
    <property type="protein sequence ID" value="EES06244"/>
    <property type="gene ID" value="SORBI_3004G032500"/>
</dbReference>
<dbReference type="Gramene" id="EES06244">
    <property type="protein sequence ID" value="EES06244"/>
    <property type="gene ID" value="SORBI_3004G032500"/>
</dbReference>
<dbReference type="KEGG" id="sbi:8057526"/>
<dbReference type="eggNOG" id="ENOG502QW75">
    <property type="taxonomic scope" value="Eukaryota"/>
</dbReference>
<dbReference type="HOGENOM" id="CLU_048961_1_0_1"/>
<dbReference type="InParanoid" id="C5XTX2"/>
<dbReference type="OMA" id="WMTREST"/>
<dbReference type="OrthoDB" id="672180at2759"/>
<dbReference type="Proteomes" id="UP000000768">
    <property type="component" value="Chromosome 4"/>
</dbReference>
<dbReference type="GO" id="GO:0005886">
    <property type="term" value="C:plasma membrane"/>
    <property type="evidence" value="ECO:0007669"/>
    <property type="project" value="UniProtKB-SubCell"/>
</dbReference>
<dbReference type="InterPro" id="IPR006702">
    <property type="entry name" value="CASP_dom"/>
</dbReference>
<dbReference type="PANTHER" id="PTHR33573:SF53">
    <property type="entry name" value="CASP-LIKE PROTEIN 4A2"/>
    <property type="match status" value="1"/>
</dbReference>
<dbReference type="PANTHER" id="PTHR33573">
    <property type="entry name" value="CASP-LIKE PROTEIN 4A4"/>
    <property type="match status" value="1"/>
</dbReference>
<dbReference type="Pfam" id="PF04535">
    <property type="entry name" value="CASP_dom"/>
    <property type="match status" value="1"/>
</dbReference>
<dbReference type="PRINTS" id="PR01217">
    <property type="entry name" value="PRICHEXTENSN"/>
</dbReference>
<sequence>MGLRDSLKEREDRRSSEEEGDARQSWMTRESTTGWRKESTAALGTPVADWQCVLLLQFGALQQKLLKAFPRAGPRPTTTLVPARPERARKKPHSQPPPSTHMALQAQATASPSPSPSPTRGRTGSGEWPDDAEKLPIAATASPARSSDAVELVVVASTRHAAAAKYVPRRSTSHTADPNPGRGGGGGSAGWYSWNGGRTRTAAPPRHARADPPPAPPRRQQPVEAPPPPPPPPPPPAPAPALPPPVPPSPPAPAQAPVPPSATAPAPAPVPAPRASSPHVQFRSADQVVPNILSRKRRAAAMQRTALLARGAAAGLCLAALAVLAADTRKGWARDSYSNYTQFRYSEAVNVIGFIYSVFQFVALVELMRRNKHLIPHPKRDLFDFTMDQVLTYLLISSSSSATARVSDLIDNWGSDPFPSMANGSIAISFLAFAVFAICSLISAYNLFRRDV</sequence>
<name>CSPL8_SORBI</name>
<organism>
    <name type="scientific">Sorghum bicolor</name>
    <name type="common">Sorghum</name>
    <name type="synonym">Sorghum vulgare</name>
    <dbReference type="NCBI Taxonomy" id="4558"/>
    <lineage>
        <taxon>Eukaryota</taxon>
        <taxon>Viridiplantae</taxon>
        <taxon>Streptophyta</taxon>
        <taxon>Embryophyta</taxon>
        <taxon>Tracheophyta</taxon>
        <taxon>Spermatophyta</taxon>
        <taxon>Magnoliopsida</taxon>
        <taxon>Liliopsida</taxon>
        <taxon>Poales</taxon>
        <taxon>Poaceae</taxon>
        <taxon>PACMAD clade</taxon>
        <taxon>Panicoideae</taxon>
        <taxon>Andropogonodae</taxon>
        <taxon>Andropogoneae</taxon>
        <taxon>Sorghinae</taxon>
        <taxon>Sorghum</taxon>
    </lineage>
</organism>
<proteinExistence type="inferred from homology"/>
<keyword id="KW-1003">Cell membrane</keyword>
<keyword id="KW-0325">Glycoprotein</keyword>
<keyword id="KW-0472">Membrane</keyword>
<keyword id="KW-1185">Reference proteome</keyword>
<keyword id="KW-0812">Transmembrane</keyword>
<keyword id="KW-1133">Transmembrane helix</keyword>
<accession>C5XTX2</accession>
<comment type="subunit">
    <text evidence="1">Homodimer and heterodimers.</text>
</comment>
<comment type="subcellular location">
    <subcellularLocation>
        <location evidence="1">Cell membrane</location>
        <topology evidence="1">Multi-pass membrane protein</topology>
    </subcellularLocation>
</comment>
<comment type="similarity">
    <text evidence="4">Belongs to the Casparian strip membrane proteins (CASP) family.</text>
</comment>
<feature type="chain" id="PRO_0000391522" description="CASP-like protein 4A1">
    <location>
        <begin position="1"/>
        <end position="452"/>
    </location>
</feature>
<feature type="topological domain" description="Cytoplasmic" evidence="2">
    <location>
        <begin position="1"/>
        <end position="305"/>
    </location>
</feature>
<feature type="transmembrane region" description="Helical" evidence="2">
    <location>
        <begin position="306"/>
        <end position="326"/>
    </location>
</feature>
<feature type="topological domain" description="Extracellular" evidence="2">
    <location>
        <begin position="327"/>
        <end position="347"/>
    </location>
</feature>
<feature type="transmembrane region" description="Helical" evidence="2">
    <location>
        <begin position="348"/>
        <end position="368"/>
    </location>
</feature>
<feature type="topological domain" description="Cytoplasmic" evidence="2">
    <location>
        <begin position="369"/>
        <end position="389"/>
    </location>
</feature>
<feature type="transmembrane region" description="Helical" evidence="2">
    <location>
        <begin position="390"/>
        <end position="406"/>
    </location>
</feature>
<feature type="topological domain" description="Extracellular" evidence="2">
    <location>
        <begin position="407"/>
        <end position="423"/>
    </location>
</feature>
<feature type="transmembrane region" description="Helical" evidence="2">
    <location>
        <begin position="424"/>
        <end position="444"/>
    </location>
</feature>
<feature type="topological domain" description="Cytoplasmic" evidence="2">
    <location>
        <begin position="445"/>
        <end position="452"/>
    </location>
</feature>
<feature type="region of interest" description="Disordered" evidence="3">
    <location>
        <begin position="1"/>
        <end position="39"/>
    </location>
</feature>
<feature type="region of interest" description="Disordered" evidence="3">
    <location>
        <begin position="71"/>
        <end position="147"/>
    </location>
</feature>
<feature type="region of interest" description="Disordered" evidence="3">
    <location>
        <begin position="164"/>
        <end position="283"/>
    </location>
</feature>
<feature type="compositionally biased region" description="Basic and acidic residues" evidence="3">
    <location>
        <begin position="1"/>
        <end position="17"/>
    </location>
</feature>
<feature type="compositionally biased region" description="Polar residues" evidence="3">
    <location>
        <begin position="25"/>
        <end position="34"/>
    </location>
</feature>
<feature type="compositionally biased region" description="Low complexity" evidence="3">
    <location>
        <begin position="105"/>
        <end position="126"/>
    </location>
</feature>
<feature type="compositionally biased region" description="Low complexity" evidence="3">
    <location>
        <begin position="190"/>
        <end position="205"/>
    </location>
</feature>
<feature type="compositionally biased region" description="Pro residues" evidence="3">
    <location>
        <begin position="211"/>
        <end position="272"/>
    </location>
</feature>
<feature type="glycosylation site" description="N-linked (GlcNAc...) asparagine" evidence="2">
    <location>
        <position position="339"/>
    </location>
</feature>
<feature type="glycosylation site" description="N-linked (GlcNAc...) asparagine" evidence="2">
    <location>
        <position position="423"/>
    </location>
</feature>
<evidence type="ECO:0000250" key="1"/>
<evidence type="ECO:0000255" key="2"/>
<evidence type="ECO:0000256" key="3">
    <source>
        <dbReference type="SAM" id="MobiDB-lite"/>
    </source>
</evidence>
<evidence type="ECO:0000305" key="4"/>
<gene>
    <name type="ordered locus">Sb04g002820</name>
</gene>
<reference key="1">
    <citation type="journal article" date="2009" name="Nature">
        <title>The Sorghum bicolor genome and the diversification of grasses.</title>
        <authorList>
            <person name="Paterson A.H."/>
            <person name="Bowers J.E."/>
            <person name="Bruggmann R."/>
            <person name="Dubchak I."/>
            <person name="Grimwood J."/>
            <person name="Gundlach H."/>
            <person name="Haberer G."/>
            <person name="Hellsten U."/>
            <person name="Mitros T."/>
            <person name="Poliakov A."/>
            <person name="Schmutz J."/>
            <person name="Spannagl M."/>
            <person name="Tang H."/>
            <person name="Wang X."/>
            <person name="Wicker T."/>
            <person name="Bharti A.K."/>
            <person name="Chapman J."/>
            <person name="Feltus F.A."/>
            <person name="Gowik U."/>
            <person name="Grigoriev I.V."/>
            <person name="Lyons E."/>
            <person name="Maher C.A."/>
            <person name="Martis M."/>
            <person name="Narechania A."/>
            <person name="Otillar R.P."/>
            <person name="Penning B.W."/>
            <person name="Salamov A.A."/>
            <person name="Wang Y."/>
            <person name="Zhang L."/>
            <person name="Carpita N.C."/>
            <person name="Freeling M."/>
            <person name="Gingle A.R."/>
            <person name="Hash C.T."/>
            <person name="Keller B."/>
            <person name="Klein P."/>
            <person name="Kresovich S."/>
            <person name="McCann M.C."/>
            <person name="Ming R."/>
            <person name="Peterson D.G."/>
            <person name="Mehboob-ur-Rahman M."/>
            <person name="Ware D."/>
            <person name="Westhoff P."/>
            <person name="Mayer K.F.X."/>
            <person name="Messing J."/>
            <person name="Rokhsar D.S."/>
        </authorList>
    </citation>
    <scope>NUCLEOTIDE SEQUENCE [LARGE SCALE GENOMIC DNA]</scope>
    <source>
        <strain>cv. BTx623</strain>
    </source>
</reference>
<reference key="2">
    <citation type="journal article" date="2018" name="Plant J.">
        <title>The Sorghum bicolor reference genome: improved assembly, gene annotations, a transcriptome atlas, and signatures of genome organization.</title>
        <authorList>
            <person name="McCormick R.F."/>
            <person name="Truong S.K."/>
            <person name="Sreedasyam A."/>
            <person name="Jenkins J."/>
            <person name="Shu S."/>
            <person name="Sims D."/>
            <person name="Kennedy M."/>
            <person name="Amirebrahimi M."/>
            <person name="Weers B.D."/>
            <person name="McKinley B."/>
            <person name="Mattison A."/>
            <person name="Morishige D.T."/>
            <person name="Grimwood J."/>
            <person name="Schmutz J."/>
            <person name="Mullet J.E."/>
        </authorList>
    </citation>
    <scope>GENOME REANNOTATION</scope>
    <source>
        <strain>cv. BTx623</strain>
    </source>
</reference>
<reference key="3">
    <citation type="journal article" date="2014" name="Plant Physiol.">
        <title>Functional and evolutionary analysis of the CASPARIAN STRIP MEMBRANE DOMAIN PROTEIN family.</title>
        <authorList>
            <person name="Roppolo D."/>
            <person name="Boeckmann B."/>
            <person name="Pfister A."/>
            <person name="Boutet E."/>
            <person name="Rubio M.C."/>
            <person name="Denervaud-Tendon V."/>
            <person name="Vermeer J.E."/>
            <person name="Gheyselinck J."/>
            <person name="Xenarios I."/>
            <person name="Geldner N."/>
        </authorList>
    </citation>
    <scope>GENE FAMILY</scope>
    <scope>NOMENCLATURE</scope>
</reference>